<feature type="chain" id="PRO_1000024020" description="Dihydroorotase">
    <location>
        <begin position="1"/>
        <end position="348"/>
    </location>
</feature>
<feature type="active site" evidence="1">
    <location>
        <position position="251"/>
    </location>
</feature>
<feature type="binding site" evidence="1">
    <location>
        <position position="17"/>
    </location>
    <ligand>
        <name>Zn(2+)</name>
        <dbReference type="ChEBI" id="CHEBI:29105"/>
        <label>1</label>
    </ligand>
</feature>
<feature type="binding site" evidence="1">
    <location>
        <begin position="19"/>
        <end position="21"/>
    </location>
    <ligand>
        <name>substrate</name>
    </ligand>
</feature>
<feature type="binding site" evidence="1">
    <location>
        <position position="19"/>
    </location>
    <ligand>
        <name>Zn(2+)</name>
        <dbReference type="ChEBI" id="CHEBI:29105"/>
        <label>1</label>
    </ligand>
</feature>
<feature type="binding site" evidence="1">
    <location>
        <position position="45"/>
    </location>
    <ligand>
        <name>substrate</name>
    </ligand>
</feature>
<feature type="binding site" description="via carbamate group" evidence="1">
    <location>
        <position position="103"/>
    </location>
    <ligand>
        <name>Zn(2+)</name>
        <dbReference type="ChEBI" id="CHEBI:29105"/>
        <label>1</label>
    </ligand>
</feature>
<feature type="binding site" description="via carbamate group" evidence="1">
    <location>
        <position position="103"/>
    </location>
    <ligand>
        <name>Zn(2+)</name>
        <dbReference type="ChEBI" id="CHEBI:29105"/>
        <label>2</label>
    </ligand>
</feature>
<feature type="binding site" evidence="1">
    <location>
        <position position="140"/>
    </location>
    <ligand>
        <name>substrate</name>
    </ligand>
</feature>
<feature type="binding site" evidence="1">
    <location>
        <position position="140"/>
    </location>
    <ligand>
        <name>Zn(2+)</name>
        <dbReference type="ChEBI" id="CHEBI:29105"/>
        <label>2</label>
    </ligand>
</feature>
<feature type="binding site" evidence="1">
    <location>
        <position position="178"/>
    </location>
    <ligand>
        <name>Zn(2+)</name>
        <dbReference type="ChEBI" id="CHEBI:29105"/>
        <label>2</label>
    </ligand>
</feature>
<feature type="binding site" evidence="1">
    <location>
        <position position="223"/>
    </location>
    <ligand>
        <name>substrate</name>
    </ligand>
</feature>
<feature type="binding site" evidence="1">
    <location>
        <position position="251"/>
    </location>
    <ligand>
        <name>Zn(2+)</name>
        <dbReference type="ChEBI" id="CHEBI:29105"/>
        <label>1</label>
    </ligand>
</feature>
<feature type="binding site" evidence="1">
    <location>
        <position position="255"/>
    </location>
    <ligand>
        <name>substrate</name>
    </ligand>
</feature>
<feature type="binding site" evidence="1">
    <location>
        <position position="267"/>
    </location>
    <ligand>
        <name>substrate</name>
    </ligand>
</feature>
<feature type="modified residue" description="N6-carboxylysine" evidence="1">
    <location>
        <position position="103"/>
    </location>
</feature>
<feature type="mutagenesis site" description="Lack of activity." evidence="2">
    <original>H</original>
    <variation>A</variation>
    <location>
        <position position="17"/>
    </location>
</feature>
<feature type="mutagenesis site" description="Lack of activity." evidence="2">
    <original>H</original>
    <variation>A</variation>
    <location>
        <position position="19"/>
    </location>
</feature>
<feature type="mutagenesis site" description="Lack of activity." evidence="2">
    <original>K</original>
    <variation>A</variation>
    <location>
        <position position="103"/>
    </location>
</feature>
<feature type="mutagenesis site" description="Lack of activity." evidence="2">
    <original>H</original>
    <variation>A</variation>
    <location>
        <position position="140"/>
    </location>
</feature>
<feature type="mutagenesis site" description="Lack of activity." evidence="2">
    <original>H</original>
    <variation>A</variation>
    <location>
        <position position="178"/>
    </location>
</feature>
<feature type="mutagenesis site" description="Lack of activity." evidence="2">
    <original>D</original>
    <variation>A</variation>
    <location>
        <position position="251"/>
    </location>
</feature>
<feature type="mutagenesis site" description="4-fold increase in activity." evidence="2">
    <original>D</original>
    <variation>E</variation>
    <location>
        <position position="251"/>
    </location>
</feature>
<proteinExistence type="evidence at protein level"/>
<organism>
    <name type="scientific">Klebsiella pneumoniae subsp. pneumoniae (strain ATCC 700721 / MGH 78578)</name>
    <dbReference type="NCBI Taxonomy" id="272620"/>
    <lineage>
        <taxon>Bacteria</taxon>
        <taxon>Pseudomonadati</taxon>
        <taxon>Pseudomonadota</taxon>
        <taxon>Gammaproteobacteria</taxon>
        <taxon>Enterobacterales</taxon>
        <taxon>Enterobacteriaceae</taxon>
        <taxon>Klebsiella/Raoultella group</taxon>
        <taxon>Klebsiella</taxon>
        <taxon>Klebsiella pneumoniae complex</taxon>
    </lineage>
</organism>
<protein>
    <recommendedName>
        <fullName evidence="1">Dihydroorotase</fullName>
        <shortName evidence="1">DHOase</shortName>
        <ecNumber evidence="1 2">3.5.2.3</ecNumber>
    </recommendedName>
</protein>
<keyword id="KW-0378">Hydrolase</keyword>
<keyword id="KW-0479">Metal-binding</keyword>
<keyword id="KW-0665">Pyrimidine biosynthesis</keyword>
<keyword id="KW-0862">Zinc</keyword>
<sequence>MTAQSQVLKIRRPDDWHIHLRDDDMLKTVVPYTSEFYGRAIVMPNLVPPVTTVAAAIAYRQRIMDAVPAGHDFTPLMTCYLTDSLDPAELERGFNEGVFTAAKLYPANATTNSSHGVTSTDAIMPVLERMEKLGMPLLVHGEVTHAEIDIFDREARFIETVMEPLRQRLPGLKVVFEHITTKDAAEYVRDGNELLAATITPQHLMFNRNHMLVGGIRPHLYCLPVLKRNIHQQALRELVASGFSRAFLGTDSAPHARHRKEASCGCAGCFNAPTALGSYATVFEEMNALQHFEAFCSLNGPRFYGLPVNESYVELVREETTVVDSIALPNDTLVPFLAGETVRWTVKK</sequence>
<evidence type="ECO:0000255" key="1">
    <source>
        <dbReference type="HAMAP-Rule" id="MF_00219"/>
    </source>
</evidence>
<evidence type="ECO:0000269" key="2">
    <source>
    </source>
</evidence>
<evidence type="ECO:0000305" key="3"/>
<accession>A6T7D6</accession>
<comment type="function">
    <text evidence="1 2">Catalyzes the reversible cyclization of carbamoyl aspartate to dihydroorotate.</text>
</comment>
<comment type="catalytic activity">
    <reaction evidence="1 2">
        <text>(S)-dihydroorotate + H2O = N-carbamoyl-L-aspartate + H(+)</text>
        <dbReference type="Rhea" id="RHEA:24296"/>
        <dbReference type="ChEBI" id="CHEBI:15377"/>
        <dbReference type="ChEBI" id="CHEBI:15378"/>
        <dbReference type="ChEBI" id="CHEBI:30864"/>
        <dbReference type="ChEBI" id="CHEBI:32814"/>
        <dbReference type="EC" id="3.5.2.3"/>
    </reaction>
</comment>
<comment type="cofactor">
    <cofactor evidence="1">
        <name>Zn(2+)</name>
        <dbReference type="ChEBI" id="CHEBI:29105"/>
    </cofactor>
    <cofactor evidence="2">
        <name>Co(2+)</name>
        <dbReference type="ChEBI" id="CHEBI:48828"/>
    </cofactor>
    <cofactor evidence="2">
        <name>Mg(2+)</name>
        <dbReference type="ChEBI" id="CHEBI:18420"/>
    </cofactor>
    <cofactor evidence="2">
        <name>Ni(2+)</name>
        <dbReference type="ChEBI" id="CHEBI:49786"/>
    </cofactor>
    <text evidence="1 2">Binds 2 Zn(2+) ions per subunit (By similarity). In vitro, shows higher activity with Co(2+), Mg(2+), Ni(2+) and Mn(2+) than with Zn(2+) (PubMed:20676924).</text>
</comment>
<comment type="biophysicochemical properties">
    <kinetics>
        <KM evidence="2">0.04 mM for dihydroorotate</KM>
        <Vmax evidence="2">8.87 umol/min/mg enzyme</Vmax>
    </kinetics>
    <phDependence>
        <text evidence="2">Optimum pH is 9.0.</text>
    </phDependence>
    <temperatureDependence>
        <text evidence="2">Optimum temperature is around 60 degrees Celsius.</text>
    </temperatureDependence>
</comment>
<comment type="pathway">
    <text evidence="1">Pyrimidine metabolism; UMP biosynthesis via de novo pathway; (S)-dihydroorotate from bicarbonate: step 3/3.</text>
</comment>
<comment type="subunit">
    <text evidence="1 2">Homodimer.</text>
</comment>
<comment type="similarity">
    <text evidence="1 3">Belongs to the metallo-dependent hydrolases superfamily. DHOase family. Class II DHOase subfamily.</text>
</comment>
<reference key="1">
    <citation type="submission" date="2006-09" db="EMBL/GenBank/DDBJ databases">
        <authorList>
            <consortium name="The Klebsiella pneumonia Genome Sequencing Project"/>
            <person name="McClelland M."/>
            <person name="Sanderson E.K."/>
            <person name="Spieth J."/>
            <person name="Clifton W.S."/>
            <person name="Latreille P."/>
            <person name="Sabo A."/>
            <person name="Pepin K."/>
            <person name="Bhonagiri V."/>
            <person name="Porwollik S."/>
            <person name="Ali J."/>
            <person name="Wilson R.K."/>
        </authorList>
    </citation>
    <scope>NUCLEOTIDE SEQUENCE [LARGE SCALE GENOMIC DNA]</scope>
    <source>
        <strain>ATCC 700721 / MGH 78578</strain>
    </source>
</reference>
<reference key="2">
    <citation type="journal article" date="2010" name="Protein J.">
        <title>Identification and characterization of a putative dihydroorotase, KPN01074, from Klebsiella pneumoniae.</title>
        <authorList>
            <person name="Wang C.C."/>
            <person name="Tsau H.W."/>
            <person name="Chen W.T."/>
            <person name="Huang C.Y."/>
        </authorList>
    </citation>
    <scope>FUNCTION</scope>
    <scope>CATALYTIC ACTIVITY</scope>
    <scope>COFACTOR</scope>
    <scope>BIOPHYSICOCHEMICAL PROPERTIES</scope>
    <scope>SUBUNIT</scope>
    <scope>MUTAGENESIS OF HIS-17; HIS-19; LYS-103; HIS-140; HIS-178 AND ASP-251</scope>
    <source>
        <strain>ATCC 13883 / DSM 30104 / JCM 1662 / NBRC 14940 / NCIMB 13281 / NCTC 9633</strain>
    </source>
</reference>
<dbReference type="EC" id="3.5.2.3" evidence="1 2"/>
<dbReference type="EMBL" id="CP000647">
    <property type="protein sequence ID" value="ABR76507.1"/>
    <property type="molecule type" value="Genomic_DNA"/>
</dbReference>
<dbReference type="RefSeq" id="WP_004176586.1">
    <property type="nucleotide sequence ID" value="NC_009648.1"/>
</dbReference>
<dbReference type="SMR" id="A6T7D6"/>
<dbReference type="STRING" id="272620.KPN_01074"/>
<dbReference type="MEROPS" id="M38.A02"/>
<dbReference type="PaxDb" id="272620-KPN_01074"/>
<dbReference type="EnsemblBacteria" id="ABR76507">
    <property type="protein sequence ID" value="ABR76507"/>
    <property type="gene ID" value="KPN_01074"/>
</dbReference>
<dbReference type="GeneID" id="69756039"/>
<dbReference type="KEGG" id="kpn:KPN_01074"/>
<dbReference type="HOGENOM" id="CLU_041558_1_0_6"/>
<dbReference type="BRENDA" id="3.5.2.3">
    <property type="organism ID" value="2814"/>
</dbReference>
<dbReference type="UniPathway" id="UPA00070">
    <property type="reaction ID" value="UER00117"/>
</dbReference>
<dbReference type="Proteomes" id="UP000000265">
    <property type="component" value="Chromosome"/>
</dbReference>
<dbReference type="GO" id="GO:0005829">
    <property type="term" value="C:cytosol"/>
    <property type="evidence" value="ECO:0007669"/>
    <property type="project" value="TreeGrafter"/>
</dbReference>
<dbReference type="GO" id="GO:0004151">
    <property type="term" value="F:dihydroorotase activity"/>
    <property type="evidence" value="ECO:0007669"/>
    <property type="project" value="UniProtKB-UniRule"/>
</dbReference>
<dbReference type="GO" id="GO:0008270">
    <property type="term" value="F:zinc ion binding"/>
    <property type="evidence" value="ECO:0007669"/>
    <property type="project" value="UniProtKB-UniRule"/>
</dbReference>
<dbReference type="GO" id="GO:0006207">
    <property type="term" value="P:'de novo' pyrimidine nucleobase biosynthetic process"/>
    <property type="evidence" value="ECO:0007669"/>
    <property type="project" value="TreeGrafter"/>
</dbReference>
<dbReference type="GO" id="GO:0044205">
    <property type="term" value="P:'de novo' UMP biosynthetic process"/>
    <property type="evidence" value="ECO:0007669"/>
    <property type="project" value="UniProtKB-UniRule"/>
</dbReference>
<dbReference type="CDD" id="cd01294">
    <property type="entry name" value="DHOase"/>
    <property type="match status" value="1"/>
</dbReference>
<dbReference type="FunFam" id="3.20.20.140:FF:000006">
    <property type="entry name" value="Dihydroorotase"/>
    <property type="match status" value="1"/>
</dbReference>
<dbReference type="Gene3D" id="3.20.20.140">
    <property type="entry name" value="Metal-dependent hydrolases"/>
    <property type="match status" value="1"/>
</dbReference>
<dbReference type="HAMAP" id="MF_00219">
    <property type="entry name" value="PyrC_classII"/>
    <property type="match status" value="1"/>
</dbReference>
<dbReference type="InterPro" id="IPR006680">
    <property type="entry name" value="Amidohydro-rel"/>
</dbReference>
<dbReference type="InterPro" id="IPR004721">
    <property type="entry name" value="DHOdimr"/>
</dbReference>
<dbReference type="InterPro" id="IPR002195">
    <property type="entry name" value="Dihydroorotase_CS"/>
</dbReference>
<dbReference type="InterPro" id="IPR032466">
    <property type="entry name" value="Metal_Hydrolase"/>
</dbReference>
<dbReference type="NCBIfam" id="TIGR00856">
    <property type="entry name" value="pyrC_dimer"/>
    <property type="match status" value="1"/>
</dbReference>
<dbReference type="PANTHER" id="PTHR43137">
    <property type="entry name" value="DIHYDROOROTASE"/>
    <property type="match status" value="1"/>
</dbReference>
<dbReference type="PANTHER" id="PTHR43137:SF1">
    <property type="entry name" value="DIHYDROOROTASE"/>
    <property type="match status" value="1"/>
</dbReference>
<dbReference type="Pfam" id="PF01979">
    <property type="entry name" value="Amidohydro_1"/>
    <property type="match status" value="1"/>
</dbReference>
<dbReference type="PIRSF" id="PIRSF001237">
    <property type="entry name" value="DHOdimr"/>
    <property type="match status" value="1"/>
</dbReference>
<dbReference type="SUPFAM" id="SSF51556">
    <property type="entry name" value="Metallo-dependent hydrolases"/>
    <property type="match status" value="1"/>
</dbReference>
<dbReference type="PROSITE" id="PS00483">
    <property type="entry name" value="DIHYDROOROTASE_2"/>
    <property type="match status" value="1"/>
</dbReference>
<gene>
    <name evidence="1" type="primary">pyrC</name>
    <name type="ordered locus">KPN78578_10460</name>
    <name type="ORF">KPN_01074</name>
</gene>
<name>PYRC_KLEP7</name>